<gene>
    <name type="primary">STS1</name>
    <name type="ORF">MGG_08586</name>
</gene>
<feature type="chain" id="PRO_0000409415" description="Tethering factor for nuclear proteasome STS1">
    <location>
        <begin position="1"/>
        <end position="313"/>
    </location>
</feature>
<feature type="region of interest" description="Disordered" evidence="2">
    <location>
        <begin position="1"/>
        <end position="76"/>
    </location>
</feature>
<feature type="region of interest" description="Disordered" evidence="2">
    <location>
        <begin position="264"/>
        <end position="301"/>
    </location>
</feature>
<feature type="compositionally biased region" description="Polar residues" evidence="2">
    <location>
        <begin position="16"/>
        <end position="34"/>
    </location>
</feature>
<feature type="compositionally biased region" description="Low complexity" evidence="2">
    <location>
        <begin position="269"/>
        <end position="285"/>
    </location>
</feature>
<reference key="1">
    <citation type="journal article" date="2005" name="Nature">
        <title>The genome sequence of the rice blast fungus Magnaporthe grisea.</title>
        <authorList>
            <person name="Dean R.A."/>
            <person name="Talbot N.J."/>
            <person name="Ebbole D.J."/>
            <person name="Farman M.L."/>
            <person name="Mitchell T.K."/>
            <person name="Orbach M.J."/>
            <person name="Thon M.R."/>
            <person name="Kulkarni R."/>
            <person name="Xu J.-R."/>
            <person name="Pan H."/>
            <person name="Read N.D."/>
            <person name="Lee Y.-H."/>
            <person name="Carbone I."/>
            <person name="Brown D."/>
            <person name="Oh Y.Y."/>
            <person name="Donofrio N."/>
            <person name="Jeong J.S."/>
            <person name="Soanes D.M."/>
            <person name="Djonovic S."/>
            <person name="Kolomiets E."/>
            <person name="Rehmeyer C."/>
            <person name="Li W."/>
            <person name="Harding M."/>
            <person name="Kim S."/>
            <person name="Lebrun M.-H."/>
            <person name="Bohnert H."/>
            <person name="Coughlan S."/>
            <person name="Butler J."/>
            <person name="Calvo S.E."/>
            <person name="Ma L.-J."/>
            <person name="Nicol R."/>
            <person name="Purcell S."/>
            <person name="Nusbaum C."/>
            <person name="Galagan J.E."/>
            <person name="Birren B.W."/>
        </authorList>
    </citation>
    <scope>NUCLEOTIDE SEQUENCE [LARGE SCALE GENOMIC DNA]</scope>
    <source>
        <strain>70-15 / ATCC MYA-4617 / FGSC 8958</strain>
    </source>
</reference>
<dbReference type="EMBL" id="CM001234">
    <property type="protein sequence ID" value="EHA49793.1"/>
    <property type="molecule type" value="Genomic_DNA"/>
</dbReference>
<dbReference type="RefSeq" id="XP_003716112.1">
    <property type="nucleotide sequence ID" value="XM_003716064.1"/>
</dbReference>
<dbReference type="SMR" id="A4QYI9"/>
<dbReference type="FunCoup" id="A4QYI9">
    <property type="interactions" value="10"/>
</dbReference>
<dbReference type="STRING" id="242507.A4QYI9"/>
<dbReference type="EnsemblFungi" id="MGG_08586T0">
    <property type="protein sequence ID" value="MGG_08586T0"/>
    <property type="gene ID" value="MGG_08586"/>
</dbReference>
<dbReference type="GeneID" id="2678698"/>
<dbReference type="KEGG" id="mgr:MGG_08586"/>
<dbReference type="VEuPathDB" id="FungiDB:MGG_08586"/>
<dbReference type="eggNOG" id="ENOG502RNK4">
    <property type="taxonomic scope" value="Eukaryota"/>
</dbReference>
<dbReference type="HOGENOM" id="CLU_033658_0_0_1"/>
<dbReference type="InParanoid" id="A4QYI9"/>
<dbReference type="OMA" id="DYTPHFL"/>
<dbReference type="OrthoDB" id="10061064at2759"/>
<dbReference type="Proteomes" id="UP000009058">
    <property type="component" value="Chromosome 4"/>
</dbReference>
<dbReference type="GO" id="GO:0005737">
    <property type="term" value="C:cytoplasm"/>
    <property type="evidence" value="ECO:0007669"/>
    <property type="project" value="UniProtKB-SubCell"/>
</dbReference>
<dbReference type="GO" id="GO:0005635">
    <property type="term" value="C:nuclear envelope"/>
    <property type="evidence" value="ECO:0000250"/>
    <property type="project" value="PAMGO_MGG"/>
</dbReference>
<dbReference type="GO" id="GO:0031965">
    <property type="term" value="C:nuclear membrane"/>
    <property type="evidence" value="ECO:0000250"/>
    <property type="project" value="PAMGO_MGG"/>
</dbReference>
<dbReference type="GO" id="GO:0005634">
    <property type="term" value="C:nucleus"/>
    <property type="evidence" value="ECO:0000250"/>
    <property type="project" value="PAMGO_MGG"/>
</dbReference>
<dbReference type="GO" id="GO:0031593">
    <property type="term" value="F:polyubiquitin modification-dependent protein binding"/>
    <property type="evidence" value="ECO:0000250"/>
    <property type="project" value="PAMGO_MGG"/>
</dbReference>
<dbReference type="GO" id="GO:0070628">
    <property type="term" value="F:proteasome binding"/>
    <property type="evidence" value="ECO:0007669"/>
    <property type="project" value="TreeGrafter"/>
</dbReference>
<dbReference type="GO" id="GO:0043495">
    <property type="term" value="F:protein-membrane adaptor activity"/>
    <property type="evidence" value="ECO:0000250"/>
    <property type="project" value="PAMGO_MGG"/>
</dbReference>
<dbReference type="GO" id="GO:0031145">
    <property type="term" value="P:anaphase-promoting complex-dependent catabolic process"/>
    <property type="evidence" value="ECO:0000250"/>
    <property type="project" value="PAMGO_MGG"/>
</dbReference>
<dbReference type="GO" id="GO:0007059">
    <property type="term" value="P:chromosome segregation"/>
    <property type="evidence" value="ECO:0000250"/>
    <property type="project" value="PAMGO_MGG"/>
</dbReference>
<dbReference type="GO" id="GO:0006974">
    <property type="term" value="P:DNA damage response"/>
    <property type="evidence" value="ECO:0000250"/>
    <property type="project" value="PAMGO_MGG"/>
</dbReference>
<dbReference type="GO" id="GO:0007091">
    <property type="term" value="P:metaphase/anaphase transition of mitotic cell cycle"/>
    <property type="evidence" value="ECO:0000250"/>
    <property type="project" value="PAMGO_MGG"/>
</dbReference>
<dbReference type="GO" id="GO:0007052">
    <property type="term" value="P:mitotic spindle organization"/>
    <property type="evidence" value="ECO:0000250"/>
    <property type="project" value="PAMGO_MGG"/>
</dbReference>
<dbReference type="GO" id="GO:0071630">
    <property type="term" value="P:nuclear protein quality control by the ubiquitin-proteasome system"/>
    <property type="evidence" value="ECO:0007669"/>
    <property type="project" value="InterPro"/>
</dbReference>
<dbReference type="GO" id="GO:0031144">
    <property type="term" value="P:proteasome localization"/>
    <property type="evidence" value="ECO:0000250"/>
    <property type="project" value="PAMGO_MGG"/>
</dbReference>
<dbReference type="GO" id="GO:0043161">
    <property type="term" value="P:proteasome-mediated ubiquitin-dependent protein catabolic process"/>
    <property type="evidence" value="ECO:0000250"/>
    <property type="project" value="PAMGO_MGG"/>
</dbReference>
<dbReference type="GO" id="GO:0015031">
    <property type="term" value="P:protein transport"/>
    <property type="evidence" value="ECO:0007669"/>
    <property type="project" value="UniProtKB-KW"/>
</dbReference>
<dbReference type="FunFam" id="1.20.58.1590:FF:000001">
    <property type="entry name" value="Tethering factor for nuclear proteasome STS1"/>
    <property type="match status" value="1"/>
</dbReference>
<dbReference type="Gene3D" id="1.20.58.1590">
    <property type="entry name" value="Tethering factor for nuclear proteasome Cut8/Sts1"/>
    <property type="match status" value="1"/>
</dbReference>
<dbReference type="InterPro" id="IPR013868">
    <property type="entry name" value="Cut8/Sts1_fam"/>
</dbReference>
<dbReference type="InterPro" id="IPR038422">
    <property type="entry name" value="Cut8/Sts1_sf"/>
</dbReference>
<dbReference type="PANTHER" id="PTHR28032">
    <property type="entry name" value="FI02826P"/>
    <property type="match status" value="1"/>
</dbReference>
<dbReference type="PANTHER" id="PTHR28032:SF1">
    <property type="entry name" value="FI02826P"/>
    <property type="match status" value="1"/>
</dbReference>
<dbReference type="Pfam" id="PF08559">
    <property type="entry name" value="Cut8"/>
    <property type="match status" value="1"/>
</dbReference>
<proteinExistence type="inferred from homology"/>
<sequence length="313" mass="34174">MNVLLTPQPTPFPHQYETSRLSPQRSLSPYTNMTSRKRKADDNEGDEMSVSPLSSPAIPSRHLSRPSKKIRAAEASGRPLPLPRLLETLDTTQLRTVLQKICERHPDIGQEVVNGAPRPSVGSALGILRDYQQRLRGAIPYGQTSSDYTYYRVKQPLMALVDAISDFTPQFLPPIETQVTASLQYLDGATKVVHELPDWDSQAYRQHKDNAYDEISRAWALVITEASKRGGGFVLHTGGWDQMLAKHNQQSGGRLGSAMQAMASNGWIGNNSPNNQNASASSSSGSGAGGDPNSILNQLVNGTYGNPVRVGPW</sequence>
<comment type="function">
    <text evidence="1">Involved in ubiquitin-mediated protein degradation. Regulatory factor in the ubiquitin/proteasome pathway that controls the turnover of proteasome substrates. Targets proteasomes to the nucleus and facilitates the degradation of nuclear proteins (By similarity).</text>
</comment>
<comment type="subunit">
    <text evidence="1">Binds the proteasome.</text>
</comment>
<comment type="subcellular location">
    <subcellularLocation>
        <location evidence="1">Cytoplasm</location>
    </subcellularLocation>
    <subcellularLocation>
        <location evidence="1">Nucleus</location>
    </subcellularLocation>
</comment>
<comment type="similarity">
    <text evidence="3">Belongs to the cut8/STS1 family.</text>
</comment>
<keyword id="KW-0963">Cytoplasm</keyword>
<keyword id="KW-0539">Nucleus</keyword>
<keyword id="KW-0653">Protein transport</keyword>
<keyword id="KW-1185">Reference proteome</keyword>
<keyword id="KW-0813">Transport</keyword>
<organism>
    <name type="scientific">Pyricularia oryzae (strain 70-15 / ATCC MYA-4617 / FGSC 8958)</name>
    <name type="common">Rice blast fungus</name>
    <name type="synonym">Magnaporthe oryzae</name>
    <dbReference type="NCBI Taxonomy" id="242507"/>
    <lineage>
        <taxon>Eukaryota</taxon>
        <taxon>Fungi</taxon>
        <taxon>Dikarya</taxon>
        <taxon>Ascomycota</taxon>
        <taxon>Pezizomycotina</taxon>
        <taxon>Sordariomycetes</taxon>
        <taxon>Sordariomycetidae</taxon>
        <taxon>Magnaporthales</taxon>
        <taxon>Pyriculariaceae</taxon>
        <taxon>Pyricularia</taxon>
    </lineage>
</organism>
<evidence type="ECO:0000250" key="1"/>
<evidence type="ECO:0000256" key="2">
    <source>
        <dbReference type="SAM" id="MobiDB-lite"/>
    </source>
</evidence>
<evidence type="ECO:0000305" key="3"/>
<accession>A4QYI9</accession>
<accession>G4N669</accession>
<protein>
    <recommendedName>
        <fullName>Tethering factor for nuclear proteasome STS1</fullName>
    </recommendedName>
</protein>
<name>STS1_PYRO7</name>